<gene>
    <name evidence="1" type="primary">rpoZ</name>
    <name type="ordered locus">EcHS_A3860</name>
</gene>
<protein>
    <recommendedName>
        <fullName evidence="1">DNA-directed RNA polymerase subunit omega</fullName>
        <shortName evidence="1">RNAP omega subunit</shortName>
        <ecNumber evidence="1">2.7.7.6</ecNumber>
    </recommendedName>
    <alternativeName>
        <fullName evidence="1">RNA polymerase omega subunit</fullName>
    </alternativeName>
    <alternativeName>
        <fullName evidence="1">Transcriptase subunit omega</fullName>
    </alternativeName>
</protein>
<comment type="function">
    <text evidence="1">Promotes RNA polymerase assembly. Latches the N- and C-terminal regions of the beta' subunit thereby facilitating its interaction with the beta and alpha subunits.</text>
</comment>
<comment type="catalytic activity">
    <reaction evidence="1">
        <text>RNA(n) + a ribonucleoside 5'-triphosphate = RNA(n+1) + diphosphate</text>
        <dbReference type="Rhea" id="RHEA:21248"/>
        <dbReference type="Rhea" id="RHEA-COMP:14527"/>
        <dbReference type="Rhea" id="RHEA-COMP:17342"/>
        <dbReference type="ChEBI" id="CHEBI:33019"/>
        <dbReference type="ChEBI" id="CHEBI:61557"/>
        <dbReference type="ChEBI" id="CHEBI:140395"/>
        <dbReference type="EC" id="2.7.7.6"/>
    </reaction>
</comment>
<comment type="subunit">
    <text evidence="1">The RNAP catalytic core consists of 2 alpha, 1 beta, 1 beta' and 1 omega subunit. When a sigma factor is associated with the core the holoenzyme is formed, which can initiate transcription.</text>
</comment>
<comment type="similarity">
    <text evidence="1">Belongs to the RNA polymerase subunit omega family.</text>
</comment>
<reference key="1">
    <citation type="journal article" date="2008" name="J. Bacteriol.">
        <title>The pangenome structure of Escherichia coli: comparative genomic analysis of E. coli commensal and pathogenic isolates.</title>
        <authorList>
            <person name="Rasko D.A."/>
            <person name="Rosovitz M.J."/>
            <person name="Myers G.S.A."/>
            <person name="Mongodin E.F."/>
            <person name="Fricke W.F."/>
            <person name="Gajer P."/>
            <person name="Crabtree J."/>
            <person name="Sebaihia M."/>
            <person name="Thomson N.R."/>
            <person name="Chaudhuri R."/>
            <person name="Henderson I.R."/>
            <person name="Sperandio V."/>
            <person name="Ravel J."/>
        </authorList>
    </citation>
    <scope>NUCLEOTIDE SEQUENCE [LARGE SCALE GENOMIC DNA]</scope>
    <source>
        <strain>HS</strain>
    </source>
</reference>
<sequence>MARVTVQDAVEKIGNRFDLVLVAARRARQMQVGGKDPLVPEENDKTTVIALREIEEGLINNQILDVRERQEQQEQEAAELQAVTAIAEGRR</sequence>
<organism>
    <name type="scientific">Escherichia coli O9:H4 (strain HS)</name>
    <dbReference type="NCBI Taxonomy" id="331112"/>
    <lineage>
        <taxon>Bacteria</taxon>
        <taxon>Pseudomonadati</taxon>
        <taxon>Pseudomonadota</taxon>
        <taxon>Gammaproteobacteria</taxon>
        <taxon>Enterobacterales</taxon>
        <taxon>Enterobacteriaceae</taxon>
        <taxon>Escherichia</taxon>
    </lineage>
</organism>
<evidence type="ECO:0000255" key="1">
    <source>
        <dbReference type="HAMAP-Rule" id="MF_00366"/>
    </source>
</evidence>
<proteinExistence type="inferred from homology"/>
<keyword id="KW-0240">DNA-directed RNA polymerase</keyword>
<keyword id="KW-0548">Nucleotidyltransferase</keyword>
<keyword id="KW-0804">Transcription</keyword>
<keyword id="KW-0808">Transferase</keyword>
<feature type="chain" id="PRO_1000059911" description="DNA-directed RNA polymerase subunit omega">
    <location>
        <begin position="1"/>
        <end position="91"/>
    </location>
</feature>
<name>RPOZ_ECOHS</name>
<dbReference type="EC" id="2.7.7.6" evidence="1"/>
<dbReference type="EMBL" id="CP000802">
    <property type="protein sequence ID" value="ABV08065.1"/>
    <property type="molecule type" value="Genomic_DNA"/>
</dbReference>
<dbReference type="RefSeq" id="WP_000135058.1">
    <property type="nucleotide sequence ID" value="NC_009800.1"/>
</dbReference>
<dbReference type="SMR" id="A8A6B1"/>
<dbReference type="GeneID" id="98390719"/>
<dbReference type="KEGG" id="ecx:EcHS_A3860"/>
<dbReference type="HOGENOM" id="CLU_125406_5_3_6"/>
<dbReference type="GO" id="GO:0000428">
    <property type="term" value="C:DNA-directed RNA polymerase complex"/>
    <property type="evidence" value="ECO:0007669"/>
    <property type="project" value="UniProtKB-KW"/>
</dbReference>
<dbReference type="GO" id="GO:0003677">
    <property type="term" value="F:DNA binding"/>
    <property type="evidence" value="ECO:0007669"/>
    <property type="project" value="UniProtKB-UniRule"/>
</dbReference>
<dbReference type="GO" id="GO:0003899">
    <property type="term" value="F:DNA-directed RNA polymerase activity"/>
    <property type="evidence" value="ECO:0007669"/>
    <property type="project" value="UniProtKB-UniRule"/>
</dbReference>
<dbReference type="GO" id="GO:0006351">
    <property type="term" value="P:DNA-templated transcription"/>
    <property type="evidence" value="ECO:0007669"/>
    <property type="project" value="UniProtKB-UniRule"/>
</dbReference>
<dbReference type="FunFam" id="3.90.940.10:FF:000001">
    <property type="entry name" value="DNA-directed RNA polymerase subunit omega"/>
    <property type="match status" value="1"/>
</dbReference>
<dbReference type="Gene3D" id="3.90.940.10">
    <property type="match status" value="1"/>
</dbReference>
<dbReference type="HAMAP" id="MF_00366">
    <property type="entry name" value="RNApol_bact_RpoZ"/>
    <property type="match status" value="1"/>
</dbReference>
<dbReference type="InterPro" id="IPR003716">
    <property type="entry name" value="DNA-dir_RNA_pol_omega"/>
</dbReference>
<dbReference type="InterPro" id="IPR006110">
    <property type="entry name" value="Pol_omega/Rpo6/RPB6"/>
</dbReference>
<dbReference type="InterPro" id="IPR036161">
    <property type="entry name" value="RPB6/omega-like_sf"/>
</dbReference>
<dbReference type="NCBIfam" id="TIGR00690">
    <property type="entry name" value="rpoZ"/>
    <property type="match status" value="1"/>
</dbReference>
<dbReference type="PANTHER" id="PTHR34476">
    <property type="entry name" value="DNA-DIRECTED RNA POLYMERASE SUBUNIT OMEGA"/>
    <property type="match status" value="1"/>
</dbReference>
<dbReference type="PANTHER" id="PTHR34476:SF1">
    <property type="entry name" value="DNA-DIRECTED RNA POLYMERASE SUBUNIT OMEGA"/>
    <property type="match status" value="1"/>
</dbReference>
<dbReference type="Pfam" id="PF01192">
    <property type="entry name" value="RNA_pol_Rpb6"/>
    <property type="match status" value="1"/>
</dbReference>
<dbReference type="SMART" id="SM01409">
    <property type="entry name" value="RNA_pol_Rpb6"/>
    <property type="match status" value="1"/>
</dbReference>
<dbReference type="SUPFAM" id="SSF63562">
    <property type="entry name" value="RPB6/omega subunit-like"/>
    <property type="match status" value="1"/>
</dbReference>
<accession>A8A6B1</accession>